<reference key="1">
    <citation type="journal article" date="2004" name="J. Bacteriol.">
        <title>Complete genome sequence of the genetically tractable hydrogenotrophic methanogen Methanococcus maripaludis.</title>
        <authorList>
            <person name="Hendrickson E.L."/>
            <person name="Kaul R."/>
            <person name="Zhou Y."/>
            <person name="Bovee D."/>
            <person name="Chapman P."/>
            <person name="Chung J."/>
            <person name="Conway de Macario E."/>
            <person name="Dodsworth J.A."/>
            <person name="Gillett W."/>
            <person name="Graham D.E."/>
            <person name="Hackett M."/>
            <person name="Haydock A.K."/>
            <person name="Kang A."/>
            <person name="Land M.L."/>
            <person name="Levy R."/>
            <person name="Lie T.J."/>
            <person name="Major T.A."/>
            <person name="Moore B.C."/>
            <person name="Porat I."/>
            <person name="Palmeiri A."/>
            <person name="Rouse G."/>
            <person name="Saenphimmachak C."/>
            <person name="Soell D."/>
            <person name="Van Dien S."/>
            <person name="Wang T."/>
            <person name="Whitman W.B."/>
            <person name="Xia Q."/>
            <person name="Zhang Y."/>
            <person name="Larimer F.W."/>
            <person name="Olson M.V."/>
            <person name="Leigh J.A."/>
        </authorList>
    </citation>
    <scope>NUCLEOTIDE SEQUENCE [LARGE SCALE GENOMIC DNA]</scope>
    <source>
        <strain>DSM 14266 / JCM 13030 / NBRC 101832 / S2 / LL</strain>
    </source>
</reference>
<name>RSMA_METMP</name>
<accession>Q6LYK4</accession>
<protein>
    <recommendedName>
        <fullName evidence="1">Probable ribosomal RNA small subunit methyltransferase A</fullName>
        <ecNumber evidence="1">2.1.1.-</ecNumber>
    </recommendedName>
    <alternativeName>
        <fullName evidence="1">16S rRNA dimethyladenosine transferase</fullName>
    </alternativeName>
    <alternativeName>
        <fullName evidence="1">16S rRNA dimethylase</fullName>
    </alternativeName>
    <alternativeName>
        <fullName evidence="1">S-adenosylmethionine-6-N',N'-adenosyl(rRNA) dimethyltransferase</fullName>
    </alternativeName>
</protein>
<dbReference type="EC" id="2.1.1.-" evidence="1"/>
<dbReference type="EMBL" id="BX950229">
    <property type="protein sequence ID" value="CAF30543.1"/>
    <property type="molecule type" value="Genomic_DNA"/>
</dbReference>
<dbReference type="RefSeq" id="WP_011170931.1">
    <property type="nucleotide sequence ID" value="NC_005791.1"/>
</dbReference>
<dbReference type="SMR" id="Q6LYK4"/>
<dbReference type="STRING" id="267377.MMP0987"/>
<dbReference type="EnsemblBacteria" id="CAF30543">
    <property type="protein sequence ID" value="CAF30543"/>
    <property type="gene ID" value="MMP0987"/>
</dbReference>
<dbReference type="GeneID" id="2762339"/>
<dbReference type="KEGG" id="mmp:MMP0987"/>
<dbReference type="PATRIC" id="fig|267377.15.peg.1015"/>
<dbReference type="eggNOG" id="arCOG04131">
    <property type="taxonomic scope" value="Archaea"/>
</dbReference>
<dbReference type="HOGENOM" id="CLU_041220_0_2_2"/>
<dbReference type="OrthoDB" id="9883at2157"/>
<dbReference type="Proteomes" id="UP000000590">
    <property type="component" value="Chromosome"/>
</dbReference>
<dbReference type="GO" id="GO:0005737">
    <property type="term" value="C:cytoplasm"/>
    <property type="evidence" value="ECO:0007669"/>
    <property type="project" value="UniProtKB-SubCell"/>
</dbReference>
<dbReference type="GO" id="GO:0003723">
    <property type="term" value="F:RNA binding"/>
    <property type="evidence" value="ECO:0007669"/>
    <property type="project" value="UniProtKB-KW"/>
</dbReference>
<dbReference type="GO" id="GO:0000179">
    <property type="term" value="F:rRNA (adenine-N6,N6-)-dimethyltransferase activity"/>
    <property type="evidence" value="ECO:0007669"/>
    <property type="project" value="InterPro"/>
</dbReference>
<dbReference type="CDD" id="cd02440">
    <property type="entry name" value="AdoMet_MTases"/>
    <property type="match status" value="1"/>
</dbReference>
<dbReference type="FunFam" id="3.40.50.150:FF:000023">
    <property type="entry name" value="Ribosomal RNA small subunit methyltransferase A"/>
    <property type="match status" value="1"/>
</dbReference>
<dbReference type="Gene3D" id="1.10.8.100">
    <property type="entry name" value="Ribosomal RNA adenine dimethylase-like, domain 2"/>
    <property type="match status" value="1"/>
</dbReference>
<dbReference type="Gene3D" id="3.40.50.150">
    <property type="entry name" value="Vaccinia Virus protein VP39"/>
    <property type="match status" value="1"/>
</dbReference>
<dbReference type="HAMAP" id="MF_00607">
    <property type="entry name" value="16SrRNA_methyltr_A"/>
    <property type="match status" value="1"/>
</dbReference>
<dbReference type="InterPro" id="IPR001737">
    <property type="entry name" value="KsgA/Erm"/>
</dbReference>
<dbReference type="InterPro" id="IPR023165">
    <property type="entry name" value="rRNA_Ade_diMease-like_C"/>
</dbReference>
<dbReference type="InterPro" id="IPR020596">
    <property type="entry name" value="rRNA_Ade_Mease_Trfase_CS"/>
</dbReference>
<dbReference type="InterPro" id="IPR020598">
    <property type="entry name" value="rRNA_Ade_methylase_Trfase_N"/>
</dbReference>
<dbReference type="InterPro" id="IPR011530">
    <property type="entry name" value="rRNA_adenine_dimethylase"/>
</dbReference>
<dbReference type="InterPro" id="IPR029063">
    <property type="entry name" value="SAM-dependent_MTases_sf"/>
</dbReference>
<dbReference type="NCBIfam" id="TIGR00755">
    <property type="entry name" value="ksgA"/>
    <property type="match status" value="1"/>
</dbReference>
<dbReference type="PANTHER" id="PTHR11727">
    <property type="entry name" value="DIMETHYLADENOSINE TRANSFERASE"/>
    <property type="match status" value="1"/>
</dbReference>
<dbReference type="PANTHER" id="PTHR11727:SF7">
    <property type="entry name" value="DIMETHYLADENOSINE TRANSFERASE-RELATED"/>
    <property type="match status" value="1"/>
</dbReference>
<dbReference type="Pfam" id="PF00398">
    <property type="entry name" value="RrnaAD"/>
    <property type="match status" value="1"/>
</dbReference>
<dbReference type="SMART" id="SM00650">
    <property type="entry name" value="rADc"/>
    <property type="match status" value="1"/>
</dbReference>
<dbReference type="SUPFAM" id="SSF53335">
    <property type="entry name" value="S-adenosyl-L-methionine-dependent methyltransferases"/>
    <property type="match status" value="1"/>
</dbReference>
<dbReference type="PROSITE" id="PS01131">
    <property type="entry name" value="RRNA_A_DIMETH"/>
    <property type="match status" value="1"/>
</dbReference>
<dbReference type="PROSITE" id="PS51689">
    <property type="entry name" value="SAM_RNA_A_N6_MT"/>
    <property type="match status" value="1"/>
</dbReference>
<organism>
    <name type="scientific">Methanococcus maripaludis (strain DSM 14266 / JCM 13030 / NBRC 101832 / S2 / LL)</name>
    <dbReference type="NCBI Taxonomy" id="267377"/>
    <lineage>
        <taxon>Archaea</taxon>
        <taxon>Methanobacteriati</taxon>
        <taxon>Methanobacteriota</taxon>
        <taxon>Methanomada group</taxon>
        <taxon>Methanococci</taxon>
        <taxon>Methanococcales</taxon>
        <taxon>Methanococcaceae</taxon>
        <taxon>Methanococcus</taxon>
    </lineage>
</organism>
<proteinExistence type="inferred from homology"/>
<comment type="function">
    <text evidence="1">Specifically dimethylates two adjacent adenosines in the loop of a conserved hairpin near the 3'-end of 16S rRNA in the 30S particle. May play a critical role in biogenesis of 30S subunits.</text>
</comment>
<comment type="subcellular location">
    <subcellularLocation>
        <location evidence="1">Cytoplasm</location>
    </subcellularLocation>
</comment>
<comment type="similarity">
    <text evidence="1">Belongs to the class I-like SAM-binding methyltransferase superfamily. rRNA adenine N(6)-methyltransferase family. RsmA subfamily.</text>
</comment>
<gene>
    <name evidence="1" type="primary">rsmA</name>
    <name evidence="1" type="synonym">ksgA</name>
    <name type="ordered locus">MMP0987</name>
</gene>
<keyword id="KW-0963">Cytoplasm</keyword>
<keyword id="KW-0489">Methyltransferase</keyword>
<keyword id="KW-1185">Reference proteome</keyword>
<keyword id="KW-0694">RNA-binding</keyword>
<keyword id="KW-0698">rRNA processing</keyword>
<keyword id="KW-0949">S-adenosyl-L-methionine</keyword>
<keyword id="KW-0808">Transferase</keyword>
<sequence>MRQSKKLGQCFLKDKNFVKKAINRAEITNNDIVLEVGLGEGALTKELAKIAKKVYVIELDERLKPFADEITAEFENVEIIWSDALKVDLKNLGFNKIVANLPYQISSPITFKFLEEDFETAVLMYQYEFAKRMAGKPDTKEYSRLSVAVQYNADVEFICKVPPSAFSPKPDVNSAIVKLTKREPKYHVKDEEFFKKVLKAVFQHRNRTIKRALIDSSHEIEVDRDNLKGILEKIENEFDFTQRVFKTPPEKIGDLSNLLYDEIANLE</sequence>
<evidence type="ECO:0000255" key="1">
    <source>
        <dbReference type="HAMAP-Rule" id="MF_00607"/>
    </source>
</evidence>
<feature type="chain" id="PRO_0000101659" description="Probable ribosomal RNA small subunit methyltransferase A">
    <location>
        <begin position="1"/>
        <end position="267"/>
    </location>
</feature>
<feature type="binding site" evidence="1">
    <location>
        <position position="12"/>
    </location>
    <ligand>
        <name>S-adenosyl-L-methionine</name>
        <dbReference type="ChEBI" id="CHEBI:59789"/>
    </ligand>
</feature>
<feature type="binding site" evidence="1">
    <location>
        <position position="37"/>
    </location>
    <ligand>
        <name>S-adenosyl-L-methionine</name>
        <dbReference type="ChEBI" id="CHEBI:59789"/>
    </ligand>
</feature>
<feature type="binding site" evidence="1">
    <location>
        <position position="58"/>
    </location>
    <ligand>
        <name>S-adenosyl-L-methionine</name>
        <dbReference type="ChEBI" id="CHEBI:59789"/>
    </ligand>
</feature>
<feature type="binding site" evidence="1">
    <location>
        <position position="83"/>
    </location>
    <ligand>
        <name>S-adenosyl-L-methionine</name>
        <dbReference type="ChEBI" id="CHEBI:59789"/>
    </ligand>
</feature>
<feature type="binding site" evidence="1">
    <location>
        <position position="100"/>
    </location>
    <ligand>
        <name>S-adenosyl-L-methionine</name>
        <dbReference type="ChEBI" id="CHEBI:59789"/>
    </ligand>
</feature>